<sequence>MRLSSEAKIAESGGQPPTAGSRSETGSESTEAESADPKAQKWYQRSLNPLRWQKIPPVPEERTVSREYGASFFSIASFQWMAPLMKVGYLRPLELQDIWTVNPDREVDVLTKRFEVSLEKRTNAGAKRPLLWALYDTFRFEFLLGGFCHLISSLLIVFAPYLTRYQIAFATEAYVAQRSGQPAPRIGRGMGFVVGITVMQAIQSLCTNQFLYRGQMVGGQIRAVLILQIFNKAMKLSGRAKAGGVQSPEQQEKIKELKAAKDQALKKPGSPPADDKGWGNGRIVALMSIDVDRINLACGMFHISWTAPVSIIVALILLLVNLTYSALAGFGLLVIGMPFLTYAVRFLFKRRRNINKLTDQRVSLTQEILQGVRFVKFFGWESSFLDRLKEIRHHEIRSIQTLLAVRNGILCVSMAIPVFASMLSFITYALSNHVLDPAPIFSSLALFNSLRMPLNLLPLVLGQITDAWTALNRIQEFIVAEEQKEDIERDEHMPEAVRMDRASFTWERKAADKEAEKVEKKANPRRTEPKSEAPTDSAESDEPFQLRDMTLDIRRDELVAVIGTVGSGKSSLLAALAGDMRLTDGSVRLSTSRAFCPQYTWIQNTSLRDNILFGKDYDEKWYDQVIDACALKPDLEILPNGDATEIGERGITISGGQKQRLNIARAIYFNAELVLLDDPLSAVDAHVGRHIMDKAICGLLKGRCRILATHQLHVLSRCDRIVVMDDGRIHAVGTFDELSRDNDLFKQLMSTASQDSKEDEEEATEVVEEEAEKQAQQEPTKPAAALMQQEEKATDSVGWTVWKAYIRASGSYFNALAILFLLAFANVVNVWTNLWLSYWTSNHYPSLSTGQYIGIYAGLGAGSALTMFIFSTYMSTAGTNASRQMLQLAMTRVLRAPMSFFDTTPLGRITNRFSKDIGVMDNELCDAMRMYAITITMIVSIMILIIVFYHYFAIALVPLFLLFLTASNYYRSSAREMKRHESILRSAVYARFSEAITGTASIRAYGVQNQFRSSLRDSVDTMNGAYFLTFSNQRWLSVRLDAVAVLLVFVTGVLVVTSRFDVSPSISGLVLSYILAIAQMLQFTVRQLAEVENNMNATERVHYYGTQLEEEAPAHIPSNPVPESWPPHGEITFDNVAMRYRPGLPLVLKNLSMNISGGERIGIVGRTGAGKSSIMSALFRLTELSSGRITIDGVDISTIGLHDLRSRLAIIPQDPTLFRGSIRSNLDPFNEHSDLELWDALRKAHLIDSDTKDSAVDASNPNGNANAQRLTLDTAVDEEGLTFSLGQRQLMALARALVRNARIIICDEATSSVDFATDQRIQETMAQGFEGKTLLCIAHRLKTIIHYDRICVMDQGSIAEIDTPLNLWEKEDGIFRAMCERSGISREDIVGQVEKE</sequence>
<accession>A0A1U8QTJ9</accession>
<accession>C8V0E1</accession>
<accession>Q5AZ37</accession>
<name>CICA_EMENI</name>
<keyword id="KW-0067">ATP-binding</keyword>
<keyword id="KW-1003">Cell membrane</keyword>
<keyword id="KW-0325">Glycoprotein</keyword>
<keyword id="KW-0472">Membrane</keyword>
<keyword id="KW-0547">Nucleotide-binding</keyword>
<keyword id="KW-1185">Reference proteome</keyword>
<keyword id="KW-0812">Transmembrane</keyword>
<keyword id="KW-1133">Transmembrane helix</keyword>
<keyword id="KW-0813">Transport</keyword>
<proteinExistence type="evidence at protein level"/>
<comment type="function">
    <text evidence="6 10">ABC-type transporter; part of the gene cluster that mediates the biosynthesis of cichorine, a phytotoxin active against knapweed, corn, and soybeans (PubMed:24244835). CicA is probably involved in the secretion of cichorine (Probable).</text>
</comment>
<comment type="subcellular location">
    <subcellularLocation>
        <location evidence="10">Cell membrane</location>
        <topology evidence="1">Multi-pass membrane protein</topology>
    </subcellularLocation>
</comment>
<comment type="disruption phenotype">
    <text evidence="6">Abolishes the production of cichorine.</text>
</comment>
<comment type="biotechnology">
    <text evidence="7">Cichorine and its derivatives are promising in the course of developing novel herbicides.</text>
</comment>
<comment type="similarity">
    <text evidence="9">Belongs to the ABC transporter superfamily. ABCC family. Conjugate transporter (TC 3.A.1.208) subfamily.</text>
</comment>
<organism>
    <name type="scientific">Emericella nidulans (strain FGSC A4 / ATCC 38163 / CBS 112.46 / NRRL 194 / M139)</name>
    <name type="common">Aspergillus nidulans</name>
    <dbReference type="NCBI Taxonomy" id="227321"/>
    <lineage>
        <taxon>Eukaryota</taxon>
        <taxon>Fungi</taxon>
        <taxon>Dikarya</taxon>
        <taxon>Ascomycota</taxon>
        <taxon>Pezizomycotina</taxon>
        <taxon>Eurotiomycetes</taxon>
        <taxon>Eurotiomycetidae</taxon>
        <taxon>Eurotiales</taxon>
        <taxon>Aspergillaceae</taxon>
        <taxon>Aspergillus</taxon>
        <taxon>Aspergillus subgen. Nidulantes</taxon>
    </lineage>
</organism>
<protein>
    <recommendedName>
        <fullName evidence="8">ABC-type transporter cicA</fullName>
    </recommendedName>
    <alternativeName>
        <fullName evidence="8">Cichorine biosynthesis cluster protein A</fullName>
    </alternativeName>
</protein>
<gene>
    <name evidence="8" type="primary">cicA</name>
    <name type="ORF">AN6443</name>
    <name type="ORF">ANIA_06443</name>
</gene>
<evidence type="ECO:0000255" key="1"/>
<evidence type="ECO:0000255" key="2">
    <source>
        <dbReference type="PROSITE-ProRule" id="PRU00434"/>
    </source>
</evidence>
<evidence type="ECO:0000255" key="3">
    <source>
        <dbReference type="PROSITE-ProRule" id="PRU00441"/>
    </source>
</evidence>
<evidence type="ECO:0000255" key="4">
    <source>
        <dbReference type="PROSITE-ProRule" id="PRU00498"/>
    </source>
</evidence>
<evidence type="ECO:0000256" key="5">
    <source>
        <dbReference type="SAM" id="MobiDB-lite"/>
    </source>
</evidence>
<evidence type="ECO:0000269" key="6">
    <source>
    </source>
</evidence>
<evidence type="ECO:0000269" key="7">
    <source>
    </source>
</evidence>
<evidence type="ECO:0000303" key="8">
    <source>
    </source>
</evidence>
<evidence type="ECO:0000305" key="9"/>
<evidence type="ECO:0000305" key="10">
    <source>
    </source>
</evidence>
<dbReference type="EMBL" id="BN001301">
    <property type="protein sequence ID" value="CBF69461.1"/>
    <property type="molecule type" value="Genomic_DNA"/>
</dbReference>
<dbReference type="EMBL" id="AACD01000108">
    <property type="protein sequence ID" value="EAA58465.1"/>
    <property type="molecule type" value="Genomic_DNA"/>
</dbReference>
<dbReference type="RefSeq" id="XP_664047.1">
    <property type="nucleotide sequence ID" value="XM_658955.1"/>
</dbReference>
<dbReference type="SMR" id="A0A1U8QTJ9"/>
<dbReference type="FunCoup" id="A0A1U8QTJ9">
    <property type="interactions" value="247"/>
</dbReference>
<dbReference type="GlyCosmos" id="A0A1U8QTJ9">
    <property type="glycosylation" value="6 sites, No reported glycans"/>
</dbReference>
<dbReference type="EnsemblFungi" id="CBF69461">
    <property type="protein sequence ID" value="CBF69461"/>
    <property type="gene ID" value="ANIA_06443"/>
</dbReference>
<dbReference type="GeneID" id="2871340"/>
<dbReference type="KEGG" id="ani:ANIA_06443"/>
<dbReference type="eggNOG" id="KOG0054">
    <property type="taxonomic scope" value="Eukaryota"/>
</dbReference>
<dbReference type="HOGENOM" id="CLU_000604_27_1_1"/>
<dbReference type="InParanoid" id="A0A1U8QTJ9"/>
<dbReference type="OMA" id="QVTDAWT"/>
<dbReference type="OrthoDB" id="6500128at2759"/>
<dbReference type="Proteomes" id="UP000000560">
    <property type="component" value="Chromosome I"/>
</dbReference>
<dbReference type="GO" id="GO:0016020">
    <property type="term" value="C:membrane"/>
    <property type="evidence" value="ECO:0000318"/>
    <property type="project" value="GO_Central"/>
</dbReference>
<dbReference type="GO" id="GO:0005886">
    <property type="term" value="C:plasma membrane"/>
    <property type="evidence" value="ECO:0007669"/>
    <property type="project" value="UniProtKB-SubCell"/>
</dbReference>
<dbReference type="GO" id="GO:0140359">
    <property type="term" value="F:ABC-type transporter activity"/>
    <property type="evidence" value="ECO:0007669"/>
    <property type="project" value="InterPro"/>
</dbReference>
<dbReference type="GO" id="GO:0005524">
    <property type="term" value="F:ATP binding"/>
    <property type="evidence" value="ECO:0007669"/>
    <property type="project" value="UniProtKB-KW"/>
</dbReference>
<dbReference type="GO" id="GO:0016887">
    <property type="term" value="F:ATP hydrolysis activity"/>
    <property type="evidence" value="ECO:0007669"/>
    <property type="project" value="InterPro"/>
</dbReference>
<dbReference type="GO" id="GO:0042626">
    <property type="term" value="F:ATPase-coupled transmembrane transporter activity"/>
    <property type="evidence" value="ECO:0000318"/>
    <property type="project" value="GO_Central"/>
</dbReference>
<dbReference type="GO" id="GO:0062032">
    <property type="term" value="P:cichorine biosynthetic process"/>
    <property type="evidence" value="ECO:0000315"/>
    <property type="project" value="GO_Central"/>
</dbReference>
<dbReference type="GO" id="GO:0055085">
    <property type="term" value="P:transmembrane transport"/>
    <property type="evidence" value="ECO:0000318"/>
    <property type="project" value="GO_Central"/>
</dbReference>
<dbReference type="CDD" id="cd18597">
    <property type="entry name" value="ABC_6TM_YOR1_D1_like"/>
    <property type="match status" value="1"/>
</dbReference>
<dbReference type="CDD" id="cd18606">
    <property type="entry name" value="ABC_6TM_YOR1_D2_like"/>
    <property type="match status" value="1"/>
</dbReference>
<dbReference type="CDD" id="cd03250">
    <property type="entry name" value="ABCC_MRP_domain1"/>
    <property type="match status" value="1"/>
</dbReference>
<dbReference type="CDD" id="cd03244">
    <property type="entry name" value="ABCC_MRP_domain2"/>
    <property type="match status" value="1"/>
</dbReference>
<dbReference type="FunFam" id="3.40.50.300:FF:000565">
    <property type="entry name" value="ABC bile acid transporter"/>
    <property type="match status" value="1"/>
</dbReference>
<dbReference type="FunFam" id="3.40.50.300:FF:002040">
    <property type="entry name" value="ABC multidrug transporter (Eurofung)"/>
    <property type="match status" value="1"/>
</dbReference>
<dbReference type="FunFam" id="1.20.1560.10:FF:000010">
    <property type="entry name" value="Multidrug resistance-associated ABC transporter"/>
    <property type="match status" value="1"/>
</dbReference>
<dbReference type="Gene3D" id="1.20.1560.10">
    <property type="entry name" value="ABC transporter type 1, transmembrane domain"/>
    <property type="match status" value="2"/>
</dbReference>
<dbReference type="Gene3D" id="3.40.50.300">
    <property type="entry name" value="P-loop containing nucleotide triphosphate hydrolases"/>
    <property type="match status" value="2"/>
</dbReference>
<dbReference type="InterPro" id="IPR003593">
    <property type="entry name" value="AAA+_ATPase"/>
</dbReference>
<dbReference type="InterPro" id="IPR011527">
    <property type="entry name" value="ABC1_TM_dom"/>
</dbReference>
<dbReference type="InterPro" id="IPR036640">
    <property type="entry name" value="ABC1_TM_sf"/>
</dbReference>
<dbReference type="InterPro" id="IPR003439">
    <property type="entry name" value="ABC_transporter-like_ATP-bd"/>
</dbReference>
<dbReference type="InterPro" id="IPR017871">
    <property type="entry name" value="ABC_transporter-like_CS"/>
</dbReference>
<dbReference type="InterPro" id="IPR050173">
    <property type="entry name" value="ABC_transporter_C-like"/>
</dbReference>
<dbReference type="InterPro" id="IPR027417">
    <property type="entry name" value="P-loop_NTPase"/>
</dbReference>
<dbReference type="PANTHER" id="PTHR24223:SF464">
    <property type="entry name" value="ABC-TYPE TRANSPORTER CICA"/>
    <property type="match status" value="1"/>
</dbReference>
<dbReference type="PANTHER" id="PTHR24223">
    <property type="entry name" value="ATP-BINDING CASSETTE SUB-FAMILY C"/>
    <property type="match status" value="1"/>
</dbReference>
<dbReference type="Pfam" id="PF00664">
    <property type="entry name" value="ABC_membrane"/>
    <property type="match status" value="2"/>
</dbReference>
<dbReference type="Pfam" id="PF00005">
    <property type="entry name" value="ABC_tran"/>
    <property type="match status" value="2"/>
</dbReference>
<dbReference type="SMART" id="SM00382">
    <property type="entry name" value="AAA"/>
    <property type="match status" value="2"/>
</dbReference>
<dbReference type="SUPFAM" id="SSF90123">
    <property type="entry name" value="ABC transporter transmembrane region"/>
    <property type="match status" value="2"/>
</dbReference>
<dbReference type="SUPFAM" id="SSF52540">
    <property type="entry name" value="P-loop containing nucleoside triphosphate hydrolases"/>
    <property type="match status" value="2"/>
</dbReference>
<dbReference type="PROSITE" id="PS50929">
    <property type="entry name" value="ABC_TM1F"/>
    <property type="match status" value="2"/>
</dbReference>
<dbReference type="PROSITE" id="PS00211">
    <property type="entry name" value="ABC_TRANSPORTER_1"/>
    <property type="match status" value="2"/>
</dbReference>
<dbReference type="PROSITE" id="PS50893">
    <property type="entry name" value="ABC_TRANSPORTER_2"/>
    <property type="match status" value="2"/>
</dbReference>
<feature type="chain" id="PRO_0000450883" description="ABC-type transporter cicA">
    <location>
        <begin position="1"/>
        <end position="1396"/>
    </location>
</feature>
<feature type="transmembrane region" description="Helical" evidence="1 3">
    <location>
        <begin position="142"/>
        <end position="162"/>
    </location>
</feature>
<feature type="transmembrane region" description="Helical" evidence="1 3">
    <location>
        <begin position="191"/>
        <end position="211"/>
    </location>
</feature>
<feature type="transmembrane region" description="Helical" evidence="1 3">
    <location>
        <begin position="300"/>
        <end position="320"/>
    </location>
</feature>
<feature type="transmembrane region" description="Helical" evidence="1 3">
    <location>
        <begin position="324"/>
        <end position="344"/>
    </location>
</feature>
<feature type="transmembrane region" description="Helical" evidence="1 3">
    <location>
        <begin position="409"/>
        <end position="429"/>
    </location>
</feature>
<feature type="transmembrane region" description="Helical" evidence="1 3">
    <location>
        <begin position="440"/>
        <end position="460"/>
    </location>
</feature>
<feature type="transmembrane region" description="Helical" evidence="1 3">
    <location>
        <begin position="816"/>
        <end position="836"/>
    </location>
</feature>
<feature type="transmembrane region" description="Helical" evidence="1 3">
    <location>
        <begin position="852"/>
        <end position="872"/>
    </location>
</feature>
<feature type="transmembrane region" description="Helical" evidence="1 3">
    <location>
        <begin position="930"/>
        <end position="947"/>
    </location>
</feature>
<feature type="transmembrane region" description="Helical" evidence="1 3">
    <location>
        <begin position="951"/>
        <end position="970"/>
    </location>
</feature>
<feature type="transmembrane region" description="Helical" evidence="1 3">
    <location>
        <begin position="1036"/>
        <end position="1056"/>
    </location>
</feature>
<feature type="transmembrane region" description="Helical" evidence="1 3">
    <location>
        <begin position="1065"/>
        <end position="1085"/>
    </location>
</feature>
<feature type="domain" description="ABC transmembrane type-1 1" evidence="3">
    <location>
        <begin position="143"/>
        <end position="466"/>
    </location>
</feature>
<feature type="domain" description="ABC transporter 1" evidence="2">
    <location>
        <begin position="525"/>
        <end position="751"/>
    </location>
</feature>
<feature type="domain" description="ABC transmembrane type-1 2" evidence="3">
    <location>
        <begin position="816"/>
        <end position="1093"/>
    </location>
</feature>
<feature type="domain" description="ABC transporter 2" evidence="2">
    <location>
        <begin position="1131"/>
        <end position="1380"/>
    </location>
</feature>
<feature type="region of interest" description="Disordered" evidence="5">
    <location>
        <begin position="1"/>
        <end position="40"/>
    </location>
</feature>
<feature type="region of interest" description="Disordered" evidence="5">
    <location>
        <begin position="510"/>
        <end position="543"/>
    </location>
</feature>
<feature type="region of interest" description="Disordered" evidence="5">
    <location>
        <begin position="751"/>
        <end position="787"/>
    </location>
</feature>
<feature type="compositionally biased region" description="Low complexity" evidence="5">
    <location>
        <begin position="18"/>
        <end position="29"/>
    </location>
</feature>
<feature type="compositionally biased region" description="Basic and acidic residues" evidence="5">
    <location>
        <begin position="510"/>
        <end position="533"/>
    </location>
</feature>
<feature type="compositionally biased region" description="Acidic residues" evidence="5">
    <location>
        <begin position="757"/>
        <end position="771"/>
    </location>
</feature>
<feature type="binding site" evidence="2">
    <location>
        <begin position="563"/>
        <end position="570"/>
    </location>
    <ligand>
        <name>ATP</name>
        <dbReference type="ChEBI" id="CHEBI:30616"/>
    </ligand>
</feature>
<feature type="binding site" evidence="2">
    <location>
        <begin position="1165"/>
        <end position="1172"/>
    </location>
    <ligand>
        <name>ATP</name>
        <dbReference type="ChEBI" id="CHEBI:30616"/>
    </ligand>
</feature>
<feature type="glycosylation site" description="N-linked (GlcNAc...) asparagine" evidence="4">
    <location>
        <position position="321"/>
    </location>
</feature>
<feature type="glycosylation site" description="N-linked (GlcNAc...) asparagine" evidence="4">
    <location>
        <position position="604"/>
    </location>
</feature>
<feature type="glycosylation site" description="N-linked (GlcNAc...) asparagine" evidence="4">
    <location>
        <position position="880"/>
    </location>
</feature>
<feature type="glycosylation site" description="N-linked (GlcNAc...) asparagine" evidence="4">
    <location>
        <position position="1096"/>
    </location>
</feature>
<feature type="glycosylation site" description="N-linked (GlcNAc...) asparagine" evidence="4">
    <location>
        <position position="1150"/>
    </location>
</feature>
<feature type="glycosylation site" description="N-linked (GlcNAc...) asparagine" evidence="4">
    <location>
        <position position="1154"/>
    </location>
</feature>
<reference key="1">
    <citation type="journal article" date="2005" name="Nature">
        <title>Sequencing of Aspergillus nidulans and comparative analysis with A. fumigatus and A. oryzae.</title>
        <authorList>
            <person name="Galagan J.E."/>
            <person name="Calvo S.E."/>
            <person name="Cuomo C."/>
            <person name="Ma L.-J."/>
            <person name="Wortman J.R."/>
            <person name="Batzoglou S."/>
            <person name="Lee S.-I."/>
            <person name="Bastuerkmen M."/>
            <person name="Spevak C.C."/>
            <person name="Clutterbuck J."/>
            <person name="Kapitonov V."/>
            <person name="Jurka J."/>
            <person name="Scazzocchio C."/>
            <person name="Farman M.L."/>
            <person name="Butler J."/>
            <person name="Purcell S."/>
            <person name="Harris S."/>
            <person name="Braus G.H."/>
            <person name="Draht O."/>
            <person name="Busch S."/>
            <person name="D'Enfert C."/>
            <person name="Bouchier C."/>
            <person name="Goldman G.H."/>
            <person name="Bell-Pedersen D."/>
            <person name="Griffiths-Jones S."/>
            <person name="Doonan J.H."/>
            <person name="Yu J."/>
            <person name="Vienken K."/>
            <person name="Pain A."/>
            <person name="Freitag M."/>
            <person name="Selker E.U."/>
            <person name="Archer D.B."/>
            <person name="Penalva M.A."/>
            <person name="Oakley B.R."/>
            <person name="Momany M."/>
            <person name="Tanaka T."/>
            <person name="Kumagai T."/>
            <person name="Asai K."/>
            <person name="Machida M."/>
            <person name="Nierman W.C."/>
            <person name="Denning D.W."/>
            <person name="Caddick M.X."/>
            <person name="Hynes M."/>
            <person name="Paoletti M."/>
            <person name="Fischer R."/>
            <person name="Miller B.L."/>
            <person name="Dyer P.S."/>
            <person name="Sachs M.S."/>
            <person name="Osmani S.A."/>
            <person name="Birren B.W."/>
        </authorList>
    </citation>
    <scope>NUCLEOTIDE SEQUENCE [LARGE SCALE GENOMIC DNA]</scope>
    <source>
        <strain>FGSC A4 / ATCC 38163 / CBS 112.46 / NRRL 194 / M139</strain>
    </source>
</reference>
<reference key="2">
    <citation type="journal article" date="2009" name="Fungal Genet. Biol.">
        <title>The 2008 update of the Aspergillus nidulans genome annotation: a community effort.</title>
        <authorList>
            <person name="Wortman J.R."/>
            <person name="Gilsenan J.M."/>
            <person name="Joardar V."/>
            <person name="Deegan J."/>
            <person name="Clutterbuck J."/>
            <person name="Andersen M.R."/>
            <person name="Archer D."/>
            <person name="Bencina M."/>
            <person name="Braus G."/>
            <person name="Coutinho P."/>
            <person name="von Dohren H."/>
            <person name="Doonan J."/>
            <person name="Driessen A.J."/>
            <person name="Durek P."/>
            <person name="Espeso E."/>
            <person name="Fekete E."/>
            <person name="Flipphi M."/>
            <person name="Estrada C.G."/>
            <person name="Geysens S."/>
            <person name="Goldman G."/>
            <person name="de Groot P.W."/>
            <person name="Hansen K."/>
            <person name="Harris S.D."/>
            <person name="Heinekamp T."/>
            <person name="Helmstaedt K."/>
            <person name="Henrissat B."/>
            <person name="Hofmann G."/>
            <person name="Homan T."/>
            <person name="Horio T."/>
            <person name="Horiuchi H."/>
            <person name="James S."/>
            <person name="Jones M."/>
            <person name="Karaffa L."/>
            <person name="Karanyi Z."/>
            <person name="Kato M."/>
            <person name="Keller N."/>
            <person name="Kelly D.E."/>
            <person name="Kiel J.A."/>
            <person name="Kim J.M."/>
            <person name="van der Klei I.J."/>
            <person name="Klis F.M."/>
            <person name="Kovalchuk A."/>
            <person name="Krasevec N."/>
            <person name="Kubicek C.P."/>
            <person name="Liu B."/>
            <person name="Maccabe A."/>
            <person name="Meyer V."/>
            <person name="Mirabito P."/>
            <person name="Miskei M."/>
            <person name="Mos M."/>
            <person name="Mullins J."/>
            <person name="Nelson D.R."/>
            <person name="Nielsen J."/>
            <person name="Oakley B.R."/>
            <person name="Osmani S.A."/>
            <person name="Pakula T."/>
            <person name="Paszewski A."/>
            <person name="Paulsen I."/>
            <person name="Pilsyk S."/>
            <person name="Pocsi I."/>
            <person name="Punt P.J."/>
            <person name="Ram A.F."/>
            <person name="Ren Q."/>
            <person name="Robellet X."/>
            <person name="Robson G."/>
            <person name="Seiboth B."/>
            <person name="van Solingen P."/>
            <person name="Specht T."/>
            <person name="Sun J."/>
            <person name="Taheri-Talesh N."/>
            <person name="Takeshita N."/>
            <person name="Ussery D."/>
            <person name="vanKuyk P.A."/>
            <person name="Visser H."/>
            <person name="van de Vondervoort P.J."/>
            <person name="de Vries R.P."/>
            <person name="Walton J."/>
            <person name="Xiang X."/>
            <person name="Xiong Y."/>
            <person name="Zeng A.P."/>
            <person name="Brandt B.W."/>
            <person name="Cornell M.J."/>
            <person name="van den Hondel C.A."/>
            <person name="Visser J."/>
            <person name="Oliver S.G."/>
            <person name="Turner G."/>
        </authorList>
    </citation>
    <scope>GENOME REANNOTATION</scope>
    <source>
        <strain>FGSC A4 / ATCC 38163 / CBS 112.46 / NRRL 194 / M139</strain>
    </source>
</reference>
<reference key="3">
    <citation type="journal article" date="2012" name="J. Am. Chem. Soc.">
        <title>Illuminating the diversity of aromatic polyketide synthases in Aspergillus nidulans.</title>
        <authorList>
            <person name="Ahuja M."/>
            <person name="Chiang Y.M."/>
            <person name="Chang S.L."/>
            <person name="Praseuth M.B."/>
            <person name="Entwistle R."/>
            <person name="Sanchez J.F."/>
            <person name="Lo H.C."/>
            <person name="Yeh H.H."/>
            <person name="Oakley B.R."/>
            <person name="Wang C.C."/>
        </authorList>
    </citation>
    <scope>FUNCTION</scope>
</reference>
<reference key="4">
    <citation type="journal article" date="2012" name="Med. Chem. Commun.">
        <title>Identification and molecular genetic analysis of the cichorine gene cluster in Aspergillus nidulans.</title>
        <authorList>
            <person name="Sanchez J.F."/>
            <person name="Entwistle R."/>
            <person name="Corcoran D."/>
            <person name="Oakley B.R."/>
            <person name="Wang C.C."/>
        </authorList>
    </citation>
    <scope>FUNCTION</scope>
    <scope>DISRUPTION PHENOTYPE</scope>
</reference>
<reference key="5">
    <citation type="journal article" date="2019" name="Molecules">
        <title>Discovery of three new phytotoxins from the fungus Aspergillus nidulans by pathway inactivation.</title>
        <authorList>
            <person name="Liao L."/>
            <person name="Zhang X."/>
            <person name="Lou Y."/>
            <person name="Zhou C."/>
            <person name="Yuan Q."/>
            <person name="Gao J."/>
        </authorList>
    </citation>
    <scope>BIOTECHNOLOGY</scope>
</reference>